<protein>
    <recommendedName>
        <fullName>Non-structural protein NS-S</fullName>
    </recommendedName>
</protein>
<name>NSS_SBVBH</name>
<gene>
    <name type="primary">N</name>
</gene>
<accession>P0DXM9</accession>
<accession>H2AM14</accession>
<comment type="function">
    <text evidence="1">Plays a role in the inhibition of the host immune response by interfering with the production of interferon in infected cells (By similarity). Induces host nucleolar disorganization and host POLR2A/RPB1 degradation leading to host transcriptional shutoff (By similarity).</text>
</comment>
<comment type="subcellular location">
    <subcellularLocation>
        <location evidence="1">Host nucleus</location>
        <location evidence="1">Host nucleolus</location>
    </subcellularLocation>
</comment>
<comment type="alternative products">
    <event type="alternative initiation"/>
    <isoform>
        <id>P0DXM9-1</id>
        <id>H2AM14-1</id>
        <name>NSS</name>
        <sequence type="displayed"/>
    </isoform>
    <isoform>
        <id>H2AM13-1</id>
        <name>N</name>
        <sequence type="external"/>
    </isoform>
</comment>
<comment type="miscellaneous">
    <molecule>Isoform NSS</molecule>
    <text evidence="2">Produced by alternative initiation in the N gene, but encoded on another frame.</text>
</comment>
<comment type="similarity">
    <text evidence="2">Belongs to the orthobunyavirus NS-S protein family.</text>
</comment>
<organism>
    <name type="scientific">Bovine Schmallenberg virus (isolate Bovine/BH80/Germany/2011)</name>
    <name type="common">SBV</name>
    <dbReference type="NCBI Taxonomy" id="1318464"/>
    <lineage>
        <taxon>Viruses</taxon>
        <taxon>Riboviria</taxon>
        <taxon>Orthornavirae</taxon>
        <taxon>Negarnaviricota</taxon>
        <taxon>Polyploviricotina</taxon>
        <taxon>Ellioviricetes</taxon>
        <taxon>Bunyavirales</taxon>
        <taxon>Peribunyaviridae</taxon>
        <taxon>Orthobunyavirus</taxon>
        <taxon>Orthobunyavirus schmallenbergense</taxon>
    </lineage>
</organism>
<keyword id="KW-0024">Alternative initiation</keyword>
<keyword id="KW-1190">Host gene expression shutoff by virus</keyword>
<keyword id="KW-1048">Host nucleus</keyword>
<keyword id="KW-0945">Host-virus interaction</keyword>
<evidence type="ECO:0000250" key="1">
    <source>
        <dbReference type="UniProtKB" id="P0DXN0"/>
    </source>
</evidence>
<evidence type="ECO:0000305" key="2"/>
<sequence length="91" mass="10598">MYHNGMQLHLTRRSGMWHLLVSMGNNSTSVLLESSSSTRRRPRWSYIRRHNQVSILLLVGSNLQWLITIFPNMSQILCQTMPLHFTGCQDI</sequence>
<reference key="1">
    <citation type="journal article" date="2012" name="Emerg. Infect. Dis.">
        <title>Novel orthobunyavirus in cattle, europe, 2011.</title>
        <authorList>
            <person name="Hoffmann B."/>
            <person name="Scheuch M."/>
            <person name="Hoper D."/>
            <person name="Jungblut R."/>
            <person name="Holsteg M."/>
            <person name="Schirrmeier H."/>
            <person name="Eschbaumer M."/>
            <person name="Goller K.V."/>
            <person name="Wernike K."/>
            <person name="Fischer M."/>
            <person name="Breithaupt A."/>
            <person name="Mettenleiter T.C."/>
            <person name="Beer M."/>
        </authorList>
    </citation>
    <scope>NUCLEOTIDE SEQUENCE [GENOMIC RNA]</scope>
    <source>
        <strain>BH80/11-4</strain>
    </source>
</reference>
<dbReference type="EMBL" id="HE649914">
    <property type="protein sequence ID" value="CCF55032.1"/>
    <property type="molecule type" value="Genomic_RNA"/>
</dbReference>
<dbReference type="GO" id="GO:0044196">
    <property type="term" value="C:host cell nucleolus"/>
    <property type="evidence" value="ECO:0007669"/>
    <property type="project" value="UniProtKB-SubCell"/>
</dbReference>
<dbReference type="GO" id="GO:0039657">
    <property type="term" value="P:symbiont-mediated suppression of host gene expression"/>
    <property type="evidence" value="ECO:0007669"/>
    <property type="project" value="UniProtKB-KW"/>
</dbReference>
<dbReference type="GO" id="GO:0016032">
    <property type="term" value="P:viral process"/>
    <property type="evidence" value="ECO:0007669"/>
    <property type="project" value="InterPro"/>
</dbReference>
<dbReference type="InterPro" id="IPR000797">
    <property type="entry name" value="Bunya_NSs"/>
</dbReference>
<dbReference type="Pfam" id="PF01104">
    <property type="entry name" value="Bunya_NS-S"/>
    <property type="match status" value="1"/>
</dbReference>
<dbReference type="PIRSF" id="PIRSF003954">
    <property type="entry name" value="NS-S_OrthobunV"/>
    <property type="match status" value="1"/>
</dbReference>
<organismHost>
    <name type="scientific">Bos taurus</name>
    <name type="common">Bovine</name>
    <dbReference type="NCBI Taxonomy" id="9913"/>
</organismHost>
<organismHost>
    <name type="scientific">Ovis aries</name>
    <name type="common">Sheep</name>
    <dbReference type="NCBI Taxonomy" id="9940"/>
</organismHost>
<feature type="chain" id="PRO_0000422474" description="Non-structural protein NS-S">
    <location>
        <begin position="1"/>
        <end position="91"/>
    </location>
</feature>
<proteinExistence type="inferred from homology"/>